<sequence>MMKYRRKKKPKVCKLCQSKIDYVDYKDVKLLREFLTEKEKIIPRRVTGNCAKHQRMVKIAIKRARQMALLPYVKY</sequence>
<proteinExistence type="inferred from homology"/>
<dbReference type="EMBL" id="CP000716">
    <property type="protein sequence ID" value="ABR30502.1"/>
    <property type="molecule type" value="Genomic_DNA"/>
</dbReference>
<dbReference type="RefSeq" id="WP_012056863.1">
    <property type="nucleotide sequence ID" value="NC_009616.1"/>
</dbReference>
<dbReference type="SMR" id="A6LKQ1"/>
<dbReference type="STRING" id="391009.Tmel_0638"/>
<dbReference type="KEGG" id="tme:Tmel_0638"/>
<dbReference type="eggNOG" id="COG0238">
    <property type="taxonomic scope" value="Bacteria"/>
</dbReference>
<dbReference type="HOGENOM" id="CLU_148710_2_2_0"/>
<dbReference type="OrthoDB" id="9812008at2"/>
<dbReference type="Proteomes" id="UP000001110">
    <property type="component" value="Chromosome"/>
</dbReference>
<dbReference type="GO" id="GO:0022627">
    <property type="term" value="C:cytosolic small ribosomal subunit"/>
    <property type="evidence" value="ECO:0007669"/>
    <property type="project" value="TreeGrafter"/>
</dbReference>
<dbReference type="GO" id="GO:0070181">
    <property type="term" value="F:small ribosomal subunit rRNA binding"/>
    <property type="evidence" value="ECO:0007669"/>
    <property type="project" value="TreeGrafter"/>
</dbReference>
<dbReference type="GO" id="GO:0003735">
    <property type="term" value="F:structural constituent of ribosome"/>
    <property type="evidence" value="ECO:0007669"/>
    <property type="project" value="InterPro"/>
</dbReference>
<dbReference type="GO" id="GO:0006412">
    <property type="term" value="P:translation"/>
    <property type="evidence" value="ECO:0007669"/>
    <property type="project" value="UniProtKB-UniRule"/>
</dbReference>
<dbReference type="Gene3D" id="4.10.640.10">
    <property type="entry name" value="Ribosomal protein S18"/>
    <property type="match status" value="1"/>
</dbReference>
<dbReference type="HAMAP" id="MF_00270">
    <property type="entry name" value="Ribosomal_bS18"/>
    <property type="match status" value="1"/>
</dbReference>
<dbReference type="InterPro" id="IPR001648">
    <property type="entry name" value="Ribosomal_bS18"/>
</dbReference>
<dbReference type="InterPro" id="IPR036870">
    <property type="entry name" value="Ribosomal_bS18_sf"/>
</dbReference>
<dbReference type="NCBIfam" id="TIGR00165">
    <property type="entry name" value="S18"/>
    <property type="match status" value="1"/>
</dbReference>
<dbReference type="PANTHER" id="PTHR13479">
    <property type="entry name" value="30S RIBOSOMAL PROTEIN S18"/>
    <property type="match status" value="1"/>
</dbReference>
<dbReference type="PANTHER" id="PTHR13479:SF40">
    <property type="entry name" value="SMALL RIBOSOMAL SUBUNIT PROTEIN BS18M"/>
    <property type="match status" value="1"/>
</dbReference>
<dbReference type="Pfam" id="PF01084">
    <property type="entry name" value="Ribosomal_S18"/>
    <property type="match status" value="1"/>
</dbReference>
<dbReference type="PRINTS" id="PR00974">
    <property type="entry name" value="RIBOSOMALS18"/>
</dbReference>
<dbReference type="SUPFAM" id="SSF46911">
    <property type="entry name" value="Ribosomal protein S18"/>
    <property type="match status" value="1"/>
</dbReference>
<organism>
    <name type="scientific">Thermosipho melanesiensis (strain DSM 12029 / CIP 104789 / BI429)</name>
    <dbReference type="NCBI Taxonomy" id="391009"/>
    <lineage>
        <taxon>Bacteria</taxon>
        <taxon>Thermotogati</taxon>
        <taxon>Thermotogota</taxon>
        <taxon>Thermotogae</taxon>
        <taxon>Thermotogales</taxon>
        <taxon>Fervidobacteriaceae</taxon>
        <taxon>Thermosipho</taxon>
    </lineage>
</organism>
<keyword id="KW-0687">Ribonucleoprotein</keyword>
<keyword id="KW-0689">Ribosomal protein</keyword>
<keyword id="KW-0694">RNA-binding</keyword>
<keyword id="KW-0699">rRNA-binding</keyword>
<protein>
    <recommendedName>
        <fullName evidence="1">Small ribosomal subunit protein bS18</fullName>
    </recommendedName>
    <alternativeName>
        <fullName evidence="2">30S ribosomal protein S18</fullName>
    </alternativeName>
</protein>
<gene>
    <name evidence="1" type="primary">rpsR</name>
    <name type="ordered locus">Tmel_0638</name>
</gene>
<name>RS18_THEM4</name>
<accession>A6LKQ1</accession>
<comment type="function">
    <text evidence="1">Binds as a heterodimer with protein bS6 to the central domain of the 16S rRNA, where it helps stabilize the platform of the 30S subunit.</text>
</comment>
<comment type="subunit">
    <text evidence="1">Part of the 30S ribosomal subunit. Forms a tight heterodimer with protein bS6.</text>
</comment>
<comment type="similarity">
    <text evidence="1">Belongs to the bacterial ribosomal protein bS18 family.</text>
</comment>
<reference key="1">
    <citation type="submission" date="2007-05" db="EMBL/GenBank/DDBJ databases">
        <title>Complete sequence of Thermosipho melanesiensis BI429.</title>
        <authorList>
            <consortium name="US DOE Joint Genome Institute"/>
            <person name="Copeland A."/>
            <person name="Lucas S."/>
            <person name="Lapidus A."/>
            <person name="Barry K."/>
            <person name="Glavina del Rio T."/>
            <person name="Dalin E."/>
            <person name="Tice H."/>
            <person name="Pitluck S."/>
            <person name="Chertkov O."/>
            <person name="Brettin T."/>
            <person name="Bruce D."/>
            <person name="Detter J.C."/>
            <person name="Han C."/>
            <person name="Schmutz J."/>
            <person name="Larimer F."/>
            <person name="Land M."/>
            <person name="Hauser L."/>
            <person name="Kyrpides N."/>
            <person name="Mikhailova N."/>
            <person name="Nelson K."/>
            <person name="Gogarten J.P."/>
            <person name="Noll K."/>
            <person name="Richardson P."/>
        </authorList>
    </citation>
    <scope>NUCLEOTIDE SEQUENCE [LARGE SCALE GENOMIC DNA]</scope>
    <source>
        <strain>DSM 12029 / CIP 104789 / BI429</strain>
    </source>
</reference>
<evidence type="ECO:0000255" key="1">
    <source>
        <dbReference type="HAMAP-Rule" id="MF_00270"/>
    </source>
</evidence>
<evidence type="ECO:0000305" key="2"/>
<feature type="chain" id="PRO_1000003649" description="Small ribosomal subunit protein bS18">
    <location>
        <begin position="1"/>
        <end position="75"/>
    </location>
</feature>